<proteinExistence type="evidence at transcript level"/>
<evidence type="ECO:0000250" key="1">
    <source>
        <dbReference type="UniProtKB" id="P02542"/>
    </source>
</evidence>
<evidence type="ECO:0000250" key="2">
    <source>
        <dbReference type="UniProtKB" id="P17661"/>
    </source>
</evidence>
<evidence type="ECO:0000250" key="3">
    <source>
        <dbReference type="UniProtKB" id="P31001"/>
    </source>
</evidence>
<evidence type="ECO:0000250" key="4">
    <source>
        <dbReference type="UniProtKB" id="P48675"/>
    </source>
</evidence>
<evidence type="ECO:0000255" key="5">
    <source>
        <dbReference type="PROSITE-ProRule" id="PRU01188"/>
    </source>
</evidence>
<accession>O62654</accession>
<accession>A2VDU8</accession>
<accession>O62655</accession>
<organism>
    <name type="scientific">Bos taurus</name>
    <name type="common">Bovine</name>
    <dbReference type="NCBI Taxonomy" id="9913"/>
    <lineage>
        <taxon>Eukaryota</taxon>
        <taxon>Metazoa</taxon>
        <taxon>Chordata</taxon>
        <taxon>Craniata</taxon>
        <taxon>Vertebrata</taxon>
        <taxon>Euteleostomi</taxon>
        <taxon>Mammalia</taxon>
        <taxon>Eutheria</taxon>
        <taxon>Laurasiatheria</taxon>
        <taxon>Artiodactyla</taxon>
        <taxon>Ruminantia</taxon>
        <taxon>Pecora</taxon>
        <taxon>Bovidae</taxon>
        <taxon>Bovinae</taxon>
        <taxon>Bos</taxon>
    </lineage>
</organism>
<comment type="function">
    <text evidence="2 3">Muscle-specific type III intermediate filament essential for proper muscular structure and function. Plays a crucial role in maintaining the structure of sarcomeres, inter-connecting the Z-disks and forming the myofibrils, linking them not only to the sarcolemmal cytoskeleton, but also to the nucleus and mitochondria, thus providing strength for the muscle fiber during activity. In adult striated muscle they form a fibrous network connecting myofibrils to each other and to the plasma membrane from the periphery of the Z-line structures. May act as a sarcomeric microtubule-anchoring protein: specifically associates with detyrosinated tubulin-alpha chains, leading to buckled microtubules and mechanical resistance to contraction. Required for nuclear membrane integrity, via anchoring at the cell tip and nuclear envelope, resulting in maintenance of microtubule-derived intracellular mechanical forces (By similarity). Contributes to the transcriptional regulation of the NKX2-5 gene in cardiac progenitor cells during a short period of cardiomyogenesis and in cardiac side population stem cells in the adult. Plays a role in maintaining an optimal conformation of nebulette (NEB) on heart muscle sarcomeres to bind and recruit cardiac alpha-actin.</text>
</comment>
<comment type="subunit">
    <text evidence="2 3">Homomer. Interacts with DST. Interacts with MTM1. Interacts with EPPK1; interaction is dependent of higher-order structure of intermediate filament. Interacts with CRYAB. Interacts with NEB (via nebulin repeats 160-164). Interacts (via rod region) with NEBL (via nebulin repeats 1-5). Interacts with ASB2; the interaction targets DES for proteasomal degradation (By similarity). Interacts with PKP1 (By similarity). Interacts with FLII (By similarity).</text>
</comment>
<comment type="subcellular location">
    <subcellularLocation>
        <location evidence="2">Cytoplasm</location>
        <location evidence="2">Myofibril</location>
        <location evidence="2">Sarcomere</location>
        <location evidence="2">Z line</location>
    </subcellularLocation>
    <subcellularLocation>
        <location evidence="2">Cytoplasm</location>
    </subcellularLocation>
    <subcellularLocation>
        <location evidence="2">Cell membrane</location>
        <location evidence="2">Sarcolemma</location>
    </subcellularLocation>
    <subcellularLocation>
        <location evidence="3">Nucleus</location>
    </subcellularLocation>
    <subcellularLocation>
        <location evidence="3">Cell tip</location>
    </subcellularLocation>
    <subcellularLocation>
        <location evidence="3">Nucleus envelope</location>
    </subcellularLocation>
    <text evidence="2 3">Localizes in the intercalated disks which occur at the Z line of cardiomyocytes. Localizes in the nucleus exclusively in differentiating cardiac progenitor cells and premature cardiomyocytes. PKP2 is required for correct anchoring of DES at the cell tip and nuclear envelope (By similarity).</text>
</comment>
<comment type="PTM">
    <text evidence="4">ADP-ribosylation prevents ability to form intermediate filaments.</text>
</comment>
<comment type="PTM">
    <text evidence="3">Phosphorylation at Ser-7, Ser-28 and Ser-32 by CDK1 and phosphorylation at Ser-60 by AURKB contribute to efficient separation of desmin intermediate filaments during mitosis.</text>
</comment>
<comment type="PTM">
    <text evidence="3">Ubiquitination by a SCF-like complex containing ASB2 leads to proteasomal degradation.</text>
</comment>
<comment type="similarity">
    <text evidence="5">Belongs to the intermediate filament family.</text>
</comment>
<gene>
    <name type="primary">DES</name>
</gene>
<protein>
    <recommendedName>
        <fullName>Desmin</fullName>
    </recommendedName>
</protein>
<keyword id="KW-0013">ADP-ribosylation</keyword>
<keyword id="KW-1003">Cell membrane</keyword>
<keyword id="KW-0175">Coiled coil</keyword>
<keyword id="KW-0963">Cytoplasm</keyword>
<keyword id="KW-0403">Intermediate filament</keyword>
<keyword id="KW-0472">Membrane</keyword>
<keyword id="KW-0488">Methylation</keyword>
<keyword id="KW-0514">Muscle protein</keyword>
<keyword id="KW-0539">Nucleus</keyword>
<keyword id="KW-0597">Phosphoprotein</keyword>
<keyword id="KW-1185">Reference proteome</keyword>
<keyword id="KW-0832">Ubl conjugation</keyword>
<dbReference type="EMBL" id="AB011675">
    <property type="protein sequence ID" value="BAA25135.1"/>
    <property type="molecule type" value="Genomic_DNA"/>
</dbReference>
<dbReference type="EMBL" id="AB011673">
    <property type="protein sequence ID" value="BAA25133.1"/>
    <property type="molecule type" value="mRNA"/>
</dbReference>
<dbReference type="EMBL" id="BC133410">
    <property type="protein sequence ID" value="AAI33411.1"/>
    <property type="molecule type" value="mRNA"/>
</dbReference>
<dbReference type="RefSeq" id="NP_001075044.1">
    <property type="nucleotide sequence ID" value="NM_001081575.1"/>
</dbReference>
<dbReference type="SMR" id="O62654"/>
<dbReference type="FunCoup" id="O62654">
    <property type="interactions" value="913"/>
</dbReference>
<dbReference type="STRING" id="9913.ENSBTAP00000007041"/>
<dbReference type="PaxDb" id="9913-ENSBTAP00000007041"/>
<dbReference type="PeptideAtlas" id="O62654"/>
<dbReference type="Ensembl" id="ENSBTAT00000007041.6">
    <property type="protein sequence ID" value="ENSBTAP00000007041.4"/>
    <property type="gene ID" value="ENSBTAG00000005353.7"/>
</dbReference>
<dbReference type="GeneID" id="280765"/>
<dbReference type="KEGG" id="bta:280765"/>
<dbReference type="CTD" id="1674"/>
<dbReference type="VEuPathDB" id="HostDB:ENSBTAG00000005353"/>
<dbReference type="VGNC" id="VGNC:28013">
    <property type="gene designation" value="DES"/>
</dbReference>
<dbReference type="eggNOG" id="KOG0977">
    <property type="taxonomic scope" value="Eukaryota"/>
</dbReference>
<dbReference type="GeneTree" id="ENSGT00940000155522"/>
<dbReference type="HOGENOM" id="CLU_012560_7_4_1"/>
<dbReference type="InParanoid" id="O62654"/>
<dbReference type="OMA" id="DMEERHG"/>
<dbReference type="OrthoDB" id="2441647at2759"/>
<dbReference type="TreeFam" id="TF330122"/>
<dbReference type="Reactome" id="R-BTA-390522">
    <property type="pathway name" value="Striated Muscle Contraction"/>
</dbReference>
<dbReference type="Proteomes" id="UP000009136">
    <property type="component" value="Chromosome 2"/>
</dbReference>
<dbReference type="Bgee" id="ENSBTAG00000005353">
    <property type="expression patterns" value="Expressed in laryngeal cartilage and 102 other cell types or tissues"/>
</dbReference>
<dbReference type="GO" id="GO:0097512">
    <property type="term" value="C:cardiac myofibril"/>
    <property type="evidence" value="ECO:0007669"/>
    <property type="project" value="Ensembl"/>
</dbReference>
<dbReference type="GO" id="GO:0051286">
    <property type="term" value="C:cell tip"/>
    <property type="evidence" value="ECO:0000250"/>
    <property type="project" value="UniProtKB"/>
</dbReference>
<dbReference type="GO" id="GO:0005911">
    <property type="term" value="C:cell-cell junction"/>
    <property type="evidence" value="ECO:0000318"/>
    <property type="project" value="GO_Central"/>
</dbReference>
<dbReference type="GO" id="GO:0005737">
    <property type="term" value="C:cytoplasm"/>
    <property type="evidence" value="ECO:0000250"/>
    <property type="project" value="UniProtKB"/>
</dbReference>
<dbReference type="GO" id="GO:0005916">
    <property type="term" value="C:fascia adherens"/>
    <property type="evidence" value="ECO:0007669"/>
    <property type="project" value="Ensembl"/>
</dbReference>
<dbReference type="GO" id="GO:0014704">
    <property type="term" value="C:intercalated disc"/>
    <property type="evidence" value="ECO:0000250"/>
    <property type="project" value="UniProtKB"/>
</dbReference>
<dbReference type="GO" id="GO:0005882">
    <property type="term" value="C:intermediate filament"/>
    <property type="evidence" value="ECO:0000318"/>
    <property type="project" value="GO_Central"/>
</dbReference>
<dbReference type="GO" id="GO:0031594">
    <property type="term" value="C:neuromuscular junction"/>
    <property type="evidence" value="ECO:0007669"/>
    <property type="project" value="Ensembl"/>
</dbReference>
<dbReference type="GO" id="GO:0005635">
    <property type="term" value="C:nuclear envelope"/>
    <property type="evidence" value="ECO:0000250"/>
    <property type="project" value="UniProtKB"/>
</dbReference>
<dbReference type="GO" id="GO:0005634">
    <property type="term" value="C:nucleus"/>
    <property type="evidence" value="ECO:0000250"/>
    <property type="project" value="UniProtKB"/>
</dbReference>
<dbReference type="GO" id="GO:0042383">
    <property type="term" value="C:sarcolemma"/>
    <property type="evidence" value="ECO:0000250"/>
    <property type="project" value="UniProtKB"/>
</dbReference>
<dbReference type="GO" id="GO:0030018">
    <property type="term" value="C:Z disc"/>
    <property type="evidence" value="ECO:0000250"/>
    <property type="project" value="UniProtKB"/>
</dbReference>
<dbReference type="GO" id="GO:0008092">
    <property type="term" value="F:cytoskeletal protein binding"/>
    <property type="evidence" value="ECO:0007669"/>
    <property type="project" value="Ensembl"/>
</dbReference>
<dbReference type="GO" id="GO:0042802">
    <property type="term" value="F:identical protein binding"/>
    <property type="evidence" value="ECO:0007669"/>
    <property type="project" value="Ensembl"/>
</dbReference>
<dbReference type="GO" id="GO:0005200">
    <property type="term" value="F:structural constituent of cytoskeleton"/>
    <property type="evidence" value="ECO:0000318"/>
    <property type="project" value="GO_Central"/>
</dbReference>
<dbReference type="GO" id="GO:0045109">
    <property type="term" value="P:intermediate filament organization"/>
    <property type="evidence" value="ECO:0000250"/>
    <property type="project" value="UniProtKB"/>
</dbReference>
<dbReference type="GO" id="GO:0006998">
    <property type="term" value="P:nuclear envelope organization"/>
    <property type="evidence" value="ECO:0000250"/>
    <property type="project" value="UniProtKB"/>
</dbReference>
<dbReference type="GO" id="GO:0060538">
    <property type="term" value="P:skeletal muscle organ development"/>
    <property type="evidence" value="ECO:0000318"/>
    <property type="project" value="GO_Central"/>
</dbReference>
<dbReference type="FunFam" id="1.20.5.1160:FF:000001">
    <property type="entry name" value="Keratin type II"/>
    <property type="match status" value="1"/>
</dbReference>
<dbReference type="FunFam" id="1.20.5.170:FF:000002">
    <property type="entry name" value="Type I keratin KA11"/>
    <property type="match status" value="1"/>
</dbReference>
<dbReference type="FunFam" id="1.20.5.500:FF:000001">
    <property type="entry name" value="Type II keratin 23"/>
    <property type="match status" value="1"/>
</dbReference>
<dbReference type="Gene3D" id="1.20.5.170">
    <property type="match status" value="1"/>
</dbReference>
<dbReference type="Gene3D" id="1.20.5.500">
    <property type="entry name" value="Single helix bin"/>
    <property type="match status" value="1"/>
</dbReference>
<dbReference type="Gene3D" id="1.20.5.1160">
    <property type="entry name" value="Vasodilator-stimulated phosphoprotein"/>
    <property type="match status" value="1"/>
</dbReference>
<dbReference type="InterPro" id="IPR018039">
    <property type="entry name" value="IF_conserved"/>
</dbReference>
<dbReference type="InterPro" id="IPR039008">
    <property type="entry name" value="IF_rod_dom"/>
</dbReference>
<dbReference type="InterPro" id="IPR006821">
    <property type="entry name" value="Intermed_filament_DNA-bd"/>
</dbReference>
<dbReference type="InterPro" id="IPR050405">
    <property type="entry name" value="Intermediate_filament"/>
</dbReference>
<dbReference type="PANTHER" id="PTHR45652:SF2">
    <property type="entry name" value="DESMIN"/>
    <property type="match status" value="1"/>
</dbReference>
<dbReference type="PANTHER" id="PTHR45652">
    <property type="entry name" value="GLIAL FIBRILLARY ACIDIC PROTEIN"/>
    <property type="match status" value="1"/>
</dbReference>
<dbReference type="Pfam" id="PF00038">
    <property type="entry name" value="Filament"/>
    <property type="match status" value="1"/>
</dbReference>
<dbReference type="Pfam" id="PF04732">
    <property type="entry name" value="Filament_head"/>
    <property type="match status" value="1"/>
</dbReference>
<dbReference type="SMART" id="SM01391">
    <property type="entry name" value="Filament"/>
    <property type="match status" value="1"/>
</dbReference>
<dbReference type="SUPFAM" id="SSF64593">
    <property type="entry name" value="Intermediate filament protein, coiled coil region"/>
    <property type="match status" value="2"/>
</dbReference>
<dbReference type="PROSITE" id="PS00226">
    <property type="entry name" value="IF_ROD_1"/>
    <property type="match status" value="1"/>
</dbReference>
<dbReference type="PROSITE" id="PS51842">
    <property type="entry name" value="IF_ROD_2"/>
    <property type="match status" value="1"/>
</dbReference>
<feature type="initiator methionine" description="Removed" evidence="1">
    <location>
        <position position="1"/>
    </location>
</feature>
<feature type="chain" id="PRO_0000063769" description="Desmin">
    <location>
        <begin position="2"/>
        <end position="470"/>
    </location>
</feature>
<feature type="domain" description="IF rod" evidence="5">
    <location>
        <begin position="108"/>
        <end position="416"/>
    </location>
</feature>
<feature type="region of interest" description="Head">
    <location>
        <begin position="2"/>
        <end position="108"/>
    </location>
</feature>
<feature type="region of interest" description="Coil 1A">
    <location>
        <begin position="109"/>
        <end position="141"/>
    </location>
</feature>
<feature type="region of interest" description="Linker 1">
    <location>
        <begin position="142"/>
        <end position="151"/>
    </location>
</feature>
<feature type="region of interest" description="Coil 1B">
    <location>
        <begin position="152"/>
        <end position="252"/>
    </location>
</feature>
<feature type="region of interest" description="Linker 12">
    <location>
        <begin position="253"/>
        <end position="268"/>
    </location>
</feature>
<feature type="region of interest" description="Interaction with NEB" evidence="2">
    <location>
        <begin position="268"/>
        <end position="415"/>
    </location>
</feature>
<feature type="region of interest" description="Coil 2A">
    <location>
        <begin position="269"/>
        <end position="287"/>
    </location>
</feature>
<feature type="region of interest" description="Linker 2">
    <location>
        <begin position="288"/>
        <end position="295"/>
    </location>
</feature>
<feature type="region of interest" description="Coil 2B">
    <location>
        <begin position="296"/>
        <end position="412"/>
    </location>
</feature>
<feature type="region of interest" description="Tail">
    <location>
        <begin position="413"/>
        <end position="470"/>
    </location>
</feature>
<feature type="region of interest" description="Interaction with CRYAB" evidence="2">
    <location>
        <begin position="438"/>
        <end position="453"/>
    </location>
</feature>
<feature type="site" description="Stutter">
    <location>
        <position position="354"/>
    </location>
</feature>
<feature type="modified residue" description="Phosphoserine; by CDK1" evidence="3">
    <location>
        <position position="7"/>
    </location>
</feature>
<feature type="modified residue" description="Phosphoserine; by AURKB" evidence="2">
    <location>
        <position position="12"/>
    </location>
</feature>
<feature type="modified residue" description="Omega-N-methylarginine" evidence="3">
    <location>
        <position position="16"/>
    </location>
</feature>
<feature type="modified residue" description="Phosphothreonine; by AURKB and ROCK1" evidence="2">
    <location>
        <position position="17"/>
    </location>
</feature>
<feature type="modified residue" description="Phosphoserine; by CDK1" evidence="2">
    <location>
        <position position="28"/>
    </location>
</feature>
<feature type="modified residue" description="Phosphoserine" evidence="3">
    <location>
        <position position="31"/>
    </location>
</feature>
<feature type="modified residue" description="Phosphoserine; by CDK1" evidence="2">
    <location>
        <position position="32"/>
    </location>
</feature>
<feature type="modified residue" description="Asymmetric dimethylarginine; alternate" evidence="3">
    <location>
        <position position="37"/>
    </location>
</feature>
<feature type="modified residue" description="Omega-N-methylarginine; alternate" evidence="3">
    <location>
        <position position="37"/>
    </location>
</feature>
<feature type="modified residue" description="Phosphoserine" evidence="4">
    <location>
        <position position="45"/>
    </location>
</feature>
<feature type="modified residue" description="ADP-ribosylarginine" evidence="4">
    <location>
        <position position="58"/>
    </location>
</feature>
<feature type="modified residue" description="Phosphoserine; by AURKB" evidence="2">
    <location>
        <position position="60"/>
    </location>
</feature>
<feature type="modified residue" description="Omega-N-methylarginine" evidence="3">
    <location>
        <position position="70"/>
    </location>
</feature>
<feature type="modified residue" description="Phosphothreonine; by ROCK1" evidence="2">
    <location>
        <position position="77"/>
    </location>
</feature>
<feature type="modified residue" description="Phosphoserine" evidence="4">
    <location>
        <position position="81"/>
    </location>
</feature>
<feature type="modified residue" description="Phosphoserine" evidence="4">
    <location>
        <position position="290"/>
    </location>
</feature>
<feature type="modified residue" description="Phosphoserine" evidence="4">
    <location>
        <position position="358"/>
    </location>
</feature>
<feature type="modified residue" description="Phosphoserine" evidence="4">
    <location>
        <position position="361"/>
    </location>
</feature>
<feature type="modified residue" description="Phosphoserine" evidence="3">
    <location>
        <position position="424"/>
    </location>
</feature>
<sequence length="470" mass="53532">MSQAYSSSQRVSSYRRTFGGAPSFPLGSPLSSPVFPRAGFGTKGSSSSVTSRVYQVSRTSGGAGGLGALRASRLGSTRVPSSYGAGELLDFSLADAVNQEFLTTRTNEKVELQELNDRFANYIEKVRFLEQQNAALAAEVNRLKGREPTRVAEIYEEELRELRRQVEVLTNQRARVDVERDNLLDDLQRLKAKLQEEIQLKEEAENNLAAFRADVDAATLARIDLERRIESLNEEIAFLKKVHEEEIRELQAQLQEQQVQVEMDMSKPDLTAALRDIRAQYETIAAKNISEAEEWYKSKVSDLTQAANKNNDALRQAKQEMMEYRHQIQSYTCEIDALKGTNDSLMRQMRELEDRFASEASGYQDNIARLEEEIRHLKDEMARHLREYQDLLNVKMALDVEIATYRKLLEGEESRINLPIQTFSALNFRETSPEQRGSEVHTKKTVMIKTIETRDGEVVSEATQQQHEVL</sequence>
<reference key="1">
    <citation type="submission" date="1998-03" db="EMBL/GenBank/DDBJ databases">
        <title>Desmin structure as related to meat tenderness.</title>
        <authorList>
            <person name="Chikuni K."/>
            <person name="Tanabe R."/>
            <person name="Muroya S."/>
        </authorList>
    </citation>
    <scope>NUCLEOTIDE SEQUENCE [GENOMIC DNA / MRNA]</scope>
    <source>
        <strain>Holstein</strain>
        <tissue>Muscle</tissue>
    </source>
</reference>
<reference key="2">
    <citation type="submission" date="2007-02" db="EMBL/GenBank/DDBJ databases">
        <authorList>
            <consortium name="NIH - Mammalian Gene Collection (MGC) project"/>
        </authorList>
    </citation>
    <scope>NUCLEOTIDE SEQUENCE [LARGE SCALE MRNA]</scope>
    <source>
        <strain>Hereford</strain>
        <tissue>Fetal muscle</tissue>
    </source>
</reference>
<name>DESM_BOVIN</name>